<feature type="initiator methionine" description="Removed" evidence="1">
    <location>
        <position position="1"/>
    </location>
</feature>
<feature type="chain" id="PRO_0000389293" description="Small ribosomal subunit protein uS2">
    <location>
        <begin position="2"/>
        <end position="252"/>
    </location>
</feature>
<feature type="region of interest" description="Disordered" evidence="2">
    <location>
        <begin position="213"/>
        <end position="252"/>
    </location>
</feature>
<feature type="compositionally biased region" description="Low complexity" evidence="2">
    <location>
        <begin position="213"/>
        <end position="222"/>
    </location>
</feature>
<feature type="compositionally biased region" description="Acidic residues" evidence="2">
    <location>
        <begin position="223"/>
        <end position="252"/>
    </location>
</feature>
<feature type="modified residue" description="N-acetylserine" evidence="1">
    <location>
        <position position="2"/>
    </location>
</feature>
<sequence>MSLPATFDLTTEDAQLLLAANTHLGARNVQVHQEPYVFKTRPDGVNVVDVGKTWEKLVLAARIIAAIPNPEDIVAISSRTFGQRAVLKFSAHTGATPIAGRFTPGSFTNYITRSFKEPRLIIVTDPRSDAQAIKEASYVNIPVIALTDLDSPSEYVDVAIPCNNRGKHSIGLIWYLLAREVLRLRGALVDRTQPWSVMPDLYFYRNPEEIEQQVAEETAGAATEEEEAKEEVTEEQTEATEWAEETTEAVAW</sequence>
<reference key="1">
    <citation type="journal article" date="2009" name="Genome Res.">
        <title>Comparative genomics of protoploid Saccharomycetaceae.</title>
        <authorList>
            <consortium name="The Genolevures Consortium"/>
            <person name="Souciet J.-L."/>
            <person name="Dujon B."/>
            <person name="Gaillardin C."/>
            <person name="Johnston M."/>
            <person name="Baret P.V."/>
            <person name="Cliften P."/>
            <person name="Sherman D.J."/>
            <person name="Weissenbach J."/>
            <person name="Westhof E."/>
            <person name="Wincker P."/>
            <person name="Jubin C."/>
            <person name="Poulain J."/>
            <person name="Barbe V."/>
            <person name="Segurens B."/>
            <person name="Artiguenave F."/>
            <person name="Anthouard V."/>
            <person name="Vacherie B."/>
            <person name="Val M.-E."/>
            <person name="Fulton R.S."/>
            <person name="Minx P."/>
            <person name="Wilson R."/>
            <person name="Durrens P."/>
            <person name="Jean G."/>
            <person name="Marck C."/>
            <person name="Martin T."/>
            <person name="Nikolski M."/>
            <person name="Rolland T."/>
            <person name="Seret M.-L."/>
            <person name="Casaregola S."/>
            <person name="Despons L."/>
            <person name="Fairhead C."/>
            <person name="Fischer G."/>
            <person name="Lafontaine I."/>
            <person name="Leh V."/>
            <person name="Lemaire M."/>
            <person name="de Montigny J."/>
            <person name="Neuveglise C."/>
            <person name="Thierry A."/>
            <person name="Blanc-Lenfle I."/>
            <person name="Bleykasten C."/>
            <person name="Diffels J."/>
            <person name="Fritsch E."/>
            <person name="Frangeul L."/>
            <person name="Goeffon A."/>
            <person name="Jauniaux N."/>
            <person name="Kachouri-Lafond R."/>
            <person name="Payen C."/>
            <person name="Potier S."/>
            <person name="Pribylova L."/>
            <person name="Ozanne C."/>
            <person name="Richard G.-F."/>
            <person name="Sacerdot C."/>
            <person name="Straub M.-L."/>
            <person name="Talla E."/>
        </authorList>
    </citation>
    <scope>NUCLEOTIDE SEQUENCE [LARGE SCALE GENOMIC DNA]</scope>
    <source>
        <strain>ATCC 2623 / CBS 732 / BCRC 21506 / NBRC 1130 / NCYC 568 / NRRL Y-229</strain>
    </source>
</reference>
<keyword id="KW-0007">Acetylation</keyword>
<keyword id="KW-0963">Cytoplasm</keyword>
<keyword id="KW-1185">Reference proteome</keyword>
<keyword id="KW-0687">Ribonucleoprotein</keyword>
<keyword id="KW-0689">Ribosomal protein</keyword>
<evidence type="ECO:0000255" key="1">
    <source>
        <dbReference type="HAMAP-Rule" id="MF_03015"/>
    </source>
</evidence>
<evidence type="ECO:0000256" key="2">
    <source>
        <dbReference type="SAM" id="MobiDB-lite"/>
    </source>
</evidence>
<evidence type="ECO:0000305" key="3"/>
<name>RSSA_ZYGRC</name>
<dbReference type="EMBL" id="CU928178">
    <property type="protein sequence ID" value="CAR28328.1"/>
    <property type="molecule type" value="Genomic_DNA"/>
</dbReference>
<dbReference type="RefSeq" id="XP_002497261.1">
    <property type="nucleotide sequence ID" value="XM_002497216.1"/>
</dbReference>
<dbReference type="SMR" id="C5DX17"/>
<dbReference type="FunCoup" id="C5DX17">
    <property type="interactions" value="1451"/>
</dbReference>
<dbReference type="STRING" id="559307.C5DX17"/>
<dbReference type="GeneID" id="8205016"/>
<dbReference type="KEGG" id="zro:ZYRO0F01496g"/>
<dbReference type="HOGENOM" id="CLU_058171_2_0_1"/>
<dbReference type="InParanoid" id="C5DX17"/>
<dbReference type="Proteomes" id="UP000008536">
    <property type="component" value="Chromosome F"/>
</dbReference>
<dbReference type="GO" id="GO:0022627">
    <property type="term" value="C:cytosolic small ribosomal subunit"/>
    <property type="evidence" value="ECO:0007669"/>
    <property type="project" value="UniProtKB-UniRule"/>
</dbReference>
<dbReference type="GO" id="GO:0003735">
    <property type="term" value="F:structural constituent of ribosome"/>
    <property type="evidence" value="ECO:0007669"/>
    <property type="project" value="UniProtKB-UniRule"/>
</dbReference>
<dbReference type="GO" id="GO:0000028">
    <property type="term" value="P:ribosomal small subunit assembly"/>
    <property type="evidence" value="ECO:0007669"/>
    <property type="project" value="UniProtKB-UniRule"/>
</dbReference>
<dbReference type="GO" id="GO:0006412">
    <property type="term" value="P:translation"/>
    <property type="evidence" value="ECO:0007669"/>
    <property type="project" value="UniProtKB-UniRule"/>
</dbReference>
<dbReference type="CDD" id="cd01425">
    <property type="entry name" value="RPS2"/>
    <property type="match status" value="1"/>
</dbReference>
<dbReference type="FunFam" id="3.40.50.10490:FF:000010">
    <property type="entry name" value="40S ribosomal protein S0"/>
    <property type="match status" value="1"/>
</dbReference>
<dbReference type="Gene3D" id="3.40.50.10490">
    <property type="entry name" value="Glucose-6-phosphate isomerase like protein, domain 1"/>
    <property type="match status" value="1"/>
</dbReference>
<dbReference type="HAMAP" id="MF_03015">
    <property type="entry name" value="Ribosomal_S2_euk"/>
    <property type="match status" value="1"/>
</dbReference>
<dbReference type="InterPro" id="IPR001865">
    <property type="entry name" value="Ribosomal_uS2"/>
</dbReference>
<dbReference type="InterPro" id="IPR018130">
    <property type="entry name" value="Ribosomal_uS2_CS"/>
</dbReference>
<dbReference type="InterPro" id="IPR027498">
    <property type="entry name" value="Ribosomal_uS2_euk"/>
</dbReference>
<dbReference type="InterPro" id="IPR005707">
    <property type="entry name" value="Ribosomal_uS2_euk/arc"/>
</dbReference>
<dbReference type="InterPro" id="IPR023591">
    <property type="entry name" value="Ribosomal_uS2_flav_dom_sf"/>
</dbReference>
<dbReference type="NCBIfam" id="TIGR01012">
    <property type="entry name" value="uS2_euk_arch"/>
    <property type="match status" value="1"/>
</dbReference>
<dbReference type="PANTHER" id="PTHR11489">
    <property type="entry name" value="40S RIBOSOMAL PROTEIN SA"/>
    <property type="match status" value="1"/>
</dbReference>
<dbReference type="Pfam" id="PF00318">
    <property type="entry name" value="Ribosomal_S2"/>
    <property type="match status" value="2"/>
</dbReference>
<dbReference type="PRINTS" id="PR00395">
    <property type="entry name" value="RIBOSOMALS2"/>
</dbReference>
<dbReference type="SUPFAM" id="SSF52313">
    <property type="entry name" value="Ribosomal protein S2"/>
    <property type="match status" value="1"/>
</dbReference>
<dbReference type="PROSITE" id="PS00962">
    <property type="entry name" value="RIBOSOMAL_S2_1"/>
    <property type="match status" value="1"/>
</dbReference>
<dbReference type="PROSITE" id="PS00963">
    <property type="entry name" value="RIBOSOMAL_S2_2"/>
    <property type="match status" value="1"/>
</dbReference>
<protein>
    <recommendedName>
        <fullName evidence="1">Small ribosomal subunit protein uS2</fullName>
    </recommendedName>
    <alternativeName>
        <fullName evidence="3">40S ribosomal protein S0</fullName>
    </alternativeName>
</protein>
<comment type="function">
    <text evidence="1">Required for the assembly and/or stability of the 40S ribosomal subunit. Required for the processing of the 20S rRNA-precursor to mature 18S rRNA in a late step of the maturation of 40S ribosomal subunits.</text>
</comment>
<comment type="subunit">
    <text evidence="1">Component of the small ribosomal subunit. Mature ribosomes consist of a small (40S) and a large (60S) subunit. The 40S subunit contains about 33 different proteins and 1 molecule of RNA (18S). The 60S subunit contains about 49 different proteins and 3 molecules of RNA (25S, 5.8S and 5S). Interacts with RPS21.</text>
</comment>
<comment type="subcellular location">
    <subcellularLocation>
        <location evidence="1">Cytoplasm</location>
    </subcellularLocation>
</comment>
<comment type="similarity">
    <text evidence="1">Belongs to the universal ribosomal protein uS2 family.</text>
</comment>
<accession>C5DX17</accession>
<organism>
    <name type="scientific">Zygosaccharomyces rouxii (strain ATCC 2623 / CBS 732 / NBRC 1130 / NCYC 568 / NRRL Y-229)</name>
    <dbReference type="NCBI Taxonomy" id="559307"/>
    <lineage>
        <taxon>Eukaryota</taxon>
        <taxon>Fungi</taxon>
        <taxon>Dikarya</taxon>
        <taxon>Ascomycota</taxon>
        <taxon>Saccharomycotina</taxon>
        <taxon>Saccharomycetes</taxon>
        <taxon>Saccharomycetales</taxon>
        <taxon>Saccharomycetaceae</taxon>
        <taxon>Zygosaccharomyces</taxon>
    </lineage>
</organism>
<proteinExistence type="inferred from homology"/>
<gene>
    <name evidence="1" type="primary">RPS0</name>
    <name type="ordered locus">ZYRO0F01496g</name>
</gene>